<protein>
    <recommendedName>
        <fullName evidence="1">Pyrrolidone-carboxylate peptidase</fullName>
        <ecNumber evidence="1">3.4.19.3</ecNumber>
    </recommendedName>
    <alternativeName>
        <fullName evidence="1">5-oxoprolyl-peptidase</fullName>
    </alternativeName>
    <alternativeName>
        <fullName evidence="1">Pyroglutamyl-peptidase I</fullName>
        <shortName evidence="1">PGP-I</shortName>
        <shortName evidence="1">Pyrase</shortName>
    </alternativeName>
</protein>
<sequence length="215" mass="23482">MKTVLLTGFDPFGGESINPAWEVAKSLHEKTIGEYKIISKQVPTVFHKSISVLKEYIEELAPEFIICIGQAGGRPNITIERVAINIDDARIADNEGNQPVDVPVVEEGPAAYWSTLPMKAIVKKLQEEGIPASVSQTAGTFVCNHLFYGLMHELEKHDTKMKGGFIHIPFLPEQASNYPGQPSMSLSTIRKGIELAVEVTTTVEVDIVEVGGATH</sequence>
<accession>C1F026</accession>
<gene>
    <name evidence="1" type="primary">pcp</name>
    <name type="ordered locus">BCA_3152</name>
</gene>
<comment type="function">
    <text evidence="1">Removes 5-oxoproline from various penultimate amino acid residues except L-proline.</text>
</comment>
<comment type="catalytic activity">
    <reaction evidence="1">
        <text>Release of an N-terminal pyroglutamyl group from a polypeptide, the second amino acid generally not being Pro.</text>
        <dbReference type="EC" id="3.4.19.3"/>
    </reaction>
</comment>
<comment type="subunit">
    <text evidence="1">Homotetramer.</text>
</comment>
<comment type="subcellular location">
    <subcellularLocation>
        <location evidence="1">Cytoplasm</location>
    </subcellularLocation>
</comment>
<comment type="similarity">
    <text evidence="1">Belongs to the peptidase C15 family.</text>
</comment>
<proteinExistence type="inferred from homology"/>
<feature type="chain" id="PRO_1000192219" description="Pyrrolidone-carboxylate peptidase">
    <location>
        <begin position="1"/>
        <end position="215"/>
    </location>
</feature>
<feature type="active site" evidence="1">
    <location>
        <position position="80"/>
    </location>
</feature>
<feature type="active site" evidence="1">
    <location>
        <position position="143"/>
    </location>
</feature>
<feature type="active site" evidence="1">
    <location>
        <position position="167"/>
    </location>
</feature>
<evidence type="ECO:0000255" key="1">
    <source>
        <dbReference type="HAMAP-Rule" id="MF_00417"/>
    </source>
</evidence>
<reference key="1">
    <citation type="submission" date="2009-02" db="EMBL/GenBank/DDBJ databases">
        <title>Genome sequence of Bacillus cereus 03BB102.</title>
        <authorList>
            <person name="Dodson R.J."/>
            <person name="Jackson P."/>
            <person name="Munk A.C."/>
            <person name="Brettin T."/>
            <person name="Bruce D."/>
            <person name="Detter C."/>
            <person name="Tapia R."/>
            <person name="Han C."/>
            <person name="Sutton G."/>
            <person name="Sims D."/>
        </authorList>
    </citation>
    <scope>NUCLEOTIDE SEQUENCE [LARGE SCALE GENOMIC DNA]</scope>
    <source>
        <strain>03BB102</strain>
    </source>
</reference>
<dbReference type="EC" id="3.4.19.3" evidence="1"/>
<dbReference type="EMBL" id="CP001407">
    <property type="protein sequence ID" value="ACO30163.1"/>
    <property type="molecule type" value="Genomic_DNA"/>
</dbReference>
<dbReference type="RefSeq" id="WP_000859736.1">
    <property type="nucleotide sequence ID" value="NZ_CP009318.1"/>
</dbReference>
<dbReference type="SMR" id="C1F026"/>
<dbReference type="MEROPS" id="C15.001"/>
<dbReference type="KEGG" id="bcx:BCA_3152"/>
<dbReference type="PATRIC" id="fig|572264.18.peg.3109"/>
<dbReference type="Proteomes" id="UP000002210">
    <property type="component" value="Chromosome"/>
</dbReference>
<dbReference type="GO" id="GO:0005829">
    <property type="term" value="C:cytosol"/>
    <property type="evidence" value="ECO:0007669"/>
    <property type="project" value="InterPro"/>
</dbReference>
<dbReference type="GO" id="GO:0016920">
    <property type="term" value="F:pyroglutamyl-peptidase activity"/>
    <property type="evidence" value="ECO:0007669"/>
    <property type="project" value="UniProtKB-UniRule"/>
</dbReference>
<dbReference type="GO" id="GO:0006508">
    <property type="term" value="P:proteolysis"/>
    <property type="evidence" value="ECO:0007669"/>
    <property type="project" value="UniProtKB-KW"/>
</dbReference>
<dbReference type="CDD" id="cd00501">
    <property type="entry name" value="Peptidase_C15"/>
    <property type="match status" value="1"/>
</dbReference>
<dbReference type="FunFam" id="3.40.630.20:FF:000001">
    <property type="entry name" value="Pyrrolidone-carboxylate peptidase"/>
    <property type="match status" value="1"/>
</dbReference>
<dbReference type="Gene3D" id="3.40.630.20">
    <property type="entry name" value="Peptidase C15, pyroglutamyl peptidase I-like"/>
    <property type="match status" value="1"/>
</dbReference>
<dbReference type="HAMAP" id="MF_00417">
    <property type="entry name" value="Pyrrolid_peptidase"/>
    <property type="match status" value="1"/>
</dbReference>
<dbReference type="InterPro" id="IPR000816">
    <property type="entry name" value="Peptidase_C15"/>
</dbReference>
<dbReference type="InterPro" id="IPR016125">
    <property type="entry name" value="Peptidase_C15-like"/>
</dbReference>
<dbReference type="InterPro" id="IPR036440">
    <property type="entry name" value="Peptidase_C15-like_sf"/>
</dbReference>
<dbReference type="InterPro" id="IPR029762">
    <property type="entry name" value="PGP-I_bact-type"/>
</dbReference>
<dbReference type="InterPro" id="IPR033694">
    <property type="entry name" value="PGPEP1_Cys_AS"/>
</dbReference>
<dbReference type="InterPro" id="IPR033693">
    <property type="entry name" value="PGPEP1_Glu_AS"/>
</dbReference>
<dbReference type="NCBIfam" id="NF009676">
    <property type="entry name" value="PRK13197.1"/>
    <property type="match status" value="1"/>
</dbReference>
<dbReference type="NCBIfam" id="TIGR00504">
    <property type="entry name" value="pyro_pdase"/>
    <property type="match status" value="1"/>
</dbReference>
<dbReference type="PANTHER" id="PTHR23402">
    <property type="entry name" value="PROTEASE FAMILY C15 PYROGLUTAMYL-PEPTIDASE I-RELATED"/>
    <property type="match status" value="1"/>
</dbReference>
<dbReference type="PANTHER" id="PTHR23402:SF1">
    <property type="entry name" value="PYROGLUTAMYL-PEPTIDASE I"/>
    <property type="match status" value="1"/>
</dbReference>
<dbReference type="Pfam" id="PF01470">
    <property type="entry name" value="Peptidase_C15"/>
    <property type="match status" value="1"/>
</dbReference>
<dbReference type="PIRSF" id="PIRSF015592">
    <property type="entry name" value="Prld-crbxl_pptds"/>
    <property type="match status" value="1"/>
</dbReference>
<dbReference type="PRINTS" id="PR00706">
    <property type="entry name" value="PYROGLUPTASE"/>
</dbReference>
<dbReference type="SUPFAM" id="SSF53182">
    <property type="entry name" value="Pyrrolidone carboxyl peptidase (pyroglutamate aminopeptidase)"/>
    <property type="match status" value="1"/>
</dbReference>
<dbReference type="PROSITE" id="PS01334">
    <property type="entry name" value="PYRASE_CYS"/>
    <property type="match status" value="1"/>
</dbReference>
<dbReference type="PROSITE" id="PS01333">
    <property type="entry name" value="PYRASE_GLU"/>
    <property type="match status" value="1"/>
</dbReference>
<name>PCP_BACC3</name>
<keyword id="KW-0963">Cytoplasm</keyword>
<keyword id="KW-0378">Hydrolase</keyword>
<keyword id="KW-0645">Protease</keyword>
<keyword id="KW-0788">Thiol protease</keyword>
<organism>
    <name type="scientific">Bacillus cereus (strain 03BB102)</name>
    <dbReference type="NCBI Taxonomy" id="572264"/>
    <lineage>
        <taxon>Bacteria</taxon>
        <taxon>Bacillati</taxon>
        <taxon>Bacillota</taxon>
        <taxon>Bacilli</taxon>
        <taxon>Bacillales</taxon>
        <taxon>Bacillaceae</taxon>
        <taxon>Bacillus</taxon>
        <taxon>Bacillus cereus group</taxon>
    </lineage>
</organism>